<sequence length="599" mass="66538">MKNIRNFSIIAHIDHGKSTLSDRIIQICGGLSDREMEAQVLDSMDLERERGITIKAQSVTLDFKASDGETYQLNFIDTPGHVDFSYEVSRSLAACEGALLVVDAGQGVEAQTLANCYTAMEMDLEVVPVLNKIDLPAADPERVAEEIEDIVGIDATDAVRCSAKTGVGVTDVLERLVRDIPPPQGDPDGPLQALIIDSWFDNYLGVVSLVRIKNGTMRKGDKIKVMSTGQTYNADRLGIFTPKQVDRTELKCGEVGWLVCAIKDILGAPVGDTLTSARNPAEKALPGFKKVKPQVYAGLFPVSSDDYESFRDALGKLSLNDASLFYEPESSSALGFGFRCGFLGLLHMEIIQERLEREYDLDLITTAPTVVYEVETTAKETIYVDSPSKLPPLNNIYELREPIAECHMLLPQAYLGNVITLCIEKRGVQTNMVYHGNQVALTYEIPMAEVVLDFFDRLKSTSRGYASLDYNFKRFQASDMVRVDVLINNERVDALALITHRDNSQSRGRELVEKMKDLIPRQQFDIAIQAAIGTHIIARSTVKQLRKNVLAKCYGGDISRKKKLLQKQKEGKKRMKQIGNVELPQEAFLAILHVGKDNK</sequence>
<proteinExistence type="inferred from homology"/>
<accession>Q57LC8</accession>
<dbReference type="EC" id="3.6.5.n1" evidence="1"/>
<dbReference type="EMBL" id="AE017220">
    <property type="protein sequence ID" value="AAX66484.1"/>
    <property type="molecule type" value="Genomic_DNA"/>
</dbReference>
<dbReference type="RefSeq" id="WP_000790154.1">
    <property type="nucleotide sequence ID" value="NC_006905.1"/>
</dbReference>
<dbReference type="SMR" id="Q57LC8"/>
<dbReference type="KEGG" id="sec:SCH_2578"/>
<dbReference type="HOGENOM" id="CLU_009995_3_3_6"/>
<dbReference type="Proteomes" id="UP000000538">
    <property type="component" value="Chromosome"/>
</dbReference>
<dbReference type="GO" id="GO:0005886">
    <property type="term" value="C:plasma membrane"/>
    <property type="evidence" value="ECO:0007669"/>
    <property type="project" value="UniProtKB-SubCell"/>
</dbReference>
<dbReference type="GO" id="GO:0005525">
    <property type="term" value="F:GTP binding"/>
    <property type="evidence" value="ECO:0007669"/>
    <property type="project" value="UniProtKB-UniRule"/>
</dbReference>
<dbReference type="GO" id="GO:0003924">
    <property type="term" value="F:GTPase activity"/>
    <property type="evidence" value="ECO:0007669"/>
    <property type="project" value="UniProtKB-UniRule"/>
</dbReference>
<dbReference type="GO" id="GO:0097216">
    <property type="term" value="F:guanosine tetraphosphate binding"/>
    <property type="evidence" value="ECO:0007669"/>
    <property type="project" value="UniProtKB-ARBA"/>
</dbReference>
<dbReference type="GO" id="GO:0043022">
    <property type="term" value="F:ribosome binding"/>
    <property type="evidence" value="ECO:0007669"/>
    <property type="project" value="UniProtKB-UniRule"/>
</dbReference>
<dbReference type="GO" id="GO:0003746">
    <property type="term" value="F:translation elongation factor activity"/>
    <property type="evidence" value="ECO:0007669"/>
    <property type="project" value="UniProtKB-UniRule"/>
</dbReference>
<dbReference type="GO" id="GO:0045727">
    <property type="term" value="P:positive regulation of translation"/>
    <property type="evidence" value="ECO:0007669"/>
    <property type="project" value="UniProtKB-UniRule"/>
</dbReference>
<dbReference type="CDD" id="cd03699">
    <property type="entry name" value="EF4_II"/>
    <property type="match status" value="1"/>
</dbReference>
<dbReference type="CDD" id="cd16260">
    <property type="entry name" value="EF4_III"/>
    <property type="match status" value="1"/>
</dbReference>
<dbReference type="CDD" id="cd01890">
    <property type="entry name" value="LepA"/>
    <property type="match status" value="1"/>
</dbReference>
<dbReference type="CDD" id="cd03709">
    <property type="entry name" value="lepA_C"/>
    <property type="match status" value="1"/>
</dbReference>
<dbReference type="FunFam" id="3.30.70.240:FF:000005">
    <property type="entry name" value="Elongation factor 4"/>
    <property type="match status" value="1"/>
</dbReference>
<dbReference type="FunFam" id="3.40.50.300:FF:000078">
    <property type="entry name" value="Elongation factor 4"/>
    <property type="match status" value="1"/>
</dbReference>
<dbReference type="FunFam" id="2.40.30.10:FF:000015">
    <property type="entry name" value="Translation factor GUF1, mitochondrial"/>
    <property type="match status" value="1"/>
</dbReference>
<dbReference type="FunFam" id="3.30.70.2570:FF:000001">
    <property type="entry name" value="Translation factor GUF1, mitochondrial"/>
    <property type="match status" value="1"/>
</dbReference>
<dbReference type="FunFam" id="3.30.70.870:FF:000004">
    <property type="entry name" value="Translation factor GUF1, mitochondrial"/>
    <property type="match status" value="1"/>
</dbReference>
<dbReference type="Gene3D" id="3.30.70.240">
    <property type="match status" value="1"/>
</dbReference>
<dbReference type="Gene3D" id="3.30.70.2570">
    <property type="entry name" value="Elongation factor 4, C-terminal domain"/>
    <property type="match status" value="1"/>
</dbReference>
<dbReference type="Gene3D" id="3.30.70.870">
    <property type="entry name" value="Elongation Factor G (Translational Gtpase), domain 3"/>
    <property type="match status" value="1"/>
</dbReference>
<dbReference type="Gene3D" id="3.40.50.300">
    <property type="entry name" value="P-loop containing nucleotide triphosphate hydrolases"/>
    <property type="match status" value="1"/>
</dbReference>
<dbReference type="Gene3D" id="2.40.30.10">
    <property type="entry name" value="Translation factors"/>
    <property type="match status" value="1"/>
</dbReference>
<dbReference type="HAMAP" id="MF_00071">
    <property type="entry name" value="LepA"/>
    <property type="match status" value="1"/>
</dbReference>
<dbReference type="InterPro" id="IPR006297">
    <property type="entry name" value="EF-4"/>
</dbReference>
<dbReference type="InterPro" id="IPR035647">
    <property type="entry name" value="EFG_III/V"/>
</dbReference>
<dbReference type="InterPro" id="IPR000640">
    <property type="entry name" value="EFG_V-like"/>
</dbReference>
<dbReference type="InterPro" id="IPR004161">
    <property type="entry name" value="EFTu-like_2"/>
</dbReference>
<dbReference type="InterPro" id="IPR031157">
    <property type="entry name" value="G_TR_CS"/>
</dbReference>
<dbReference type="InterPro" id="IPR038363">
    <property type="entry name" value="LepA_C_sf"/>
</dbReference>
<dbReference type="InterPro" id="IPR013842">
    <property type="entry name" value="LepA_CTD"/>
</dbReference>
<dbReference type="InterPro" id="IPR035654">
    <property type="entry name" value="LepA_IV"/>
</dbReference>
<dbReference type="InterPro" id="IPR027417">
    <property type="entry name" value="P-loop_NTPase"/>
</dbReference>
<dbReference type="InterPro" id="IPR005225">
    <property type="entry name" value="Small_GTP-bd"/>
</dbReference>
<dbReference type="InterPro" id="IPR000795">
    <property type="entry name" value="T_Tr_GTP-bd_dom"/>
</dbReference>
<dbReference type="NCBIfam" id="TIGR01393">
    <property type="entry name" value="lepA"/>
    <property type="match status" value="1"/>
</dbReference>
<dbReference type="NCBIfam" id="TIGR00231">
    <property type="entry name" value="small_GTP"/>
    <property type="match status" value="1"/>
</dbReference>
<dbReference type="PANTHER" id="PTHR43512:SF4">
    <property type="entry name" value="TRANSLATION FACTOR GUF1 HOMOLOG, CHLOROPLASTIC"/>
    <property type="match status" value="1"/>
</dbReference>
<dbReference type="PANTHER" id="PTHR43512">
    <property type="entry name" value="TRANSLATION FACTOR GUF1-RELATED"/>
    <property type="match status" value="1"/>
</dbReference>
<dbReference type="Pfam" id="PF00679">
    <property type="entry name" value="EFG_C"/>
    <property type="match status" value="1"/>
</dbReference>
<dbReference type="Pfam" id="PF00009">
    <property type="entry name" value="GTP_EFTU"/>
    <property type="match status" value="1"/>
</dbReference>
<dbReference type="Pfam" id="PF03144">
    <property type="entry name" value="GTP_EFTU_D2"/>
    <property type="match status" value="1"/>
</dbReference>
<dbReference type="Pfam" id="PF06421">
    <property type="entry name" value="LepA_C"/>
    <property type="match status" value="1"/>
</dbReference>
<dbReference type="PRINTS" id="PR00315">
    <property type="entry name" value="ELONGATNFCT"/>
</dbReference>
<dbReference type="SUPFAM" id="SSF54980">
    <property type="entry name" value="EF-G C-terminal domain-like"/>
    <property type="match status" value="2"/>
</dbReference>
<dbReference type="SUPFAM" id="SSF52540">
    <property type="entry name" value="P-loop containing nucleoside triphosphate hydrolases"/>
    <property type="match status" value="1"/>
</dbReference>
<dbReference type="PROSITE" id="PS00301">
    <property type="entry name" value="G_TR_1"/>
    <property type="match status" value="1"/>
</dbReference>
<dbReference type="PROSITE" id="PS51722">
    <property type="entry name" value="G_TR_2"/>
    <property type="match status" value="1"/>
</dbReference>
<reference key="1">
    <citation type="journal article" date="2005" name="Nucleic Acids Res.">
        <title>The genome sequence of Salmonella enterica serovar Choleraesuis, a highly invasive and resistant zoonotic pathogen.</title>
        <authorList>
            <person name="Chiu C.-H."/>
            <person name="Tang P."/>
            <person name="Chu C."/>
            <person name="Hu S."/>
            <person name="Bao Q."/>
            <person name="Yu J."/>
            <person name="Chou Y.-Y."/>
            <person name="Wang H.-S."/>
            <person name="Lee Y.-S."/>
        </authorList>
    </citation>
    <scope>NUCLEOTIDE SEQUENCE [LARGE SCALE GENOMIC DNA]</scope>
    <source>
        <strain>SC-B67</strain>
    </source>
</reference>
<name>LEPA_SALCH</name>
<organism>
    <name type="scientific">Salmonella choleraesuis (strain SC-B67)</name>
    <dbReference type="NCBI Taxonomy" id="321314"/>
    <lineage>
        <taxon>Bacteria</taxon>
        <taxon>Pseudomonadati</taxon>
        <taxon>Pseudomonadota</taxon>
        <taxon>Gammaproteobacteria</taxon>
        <taxon>Enterobacterales</taxon>
        <taxon>Enterobacteriaceae</taxon>
        <taxon>Salmonella</taxon>
    </lineage>
</organism>
<gene>
    <name evidence="1" type="primary">lepA</name>
    <name type="ordered locus">SCH_2578</name>
</gene>
<keyword id="KW-0997">Cell inner membrane</keyword>
<keyword id="KW-1003">Cell membrane</keyword>
<keyword id="KW-0342">GTP-binding</keyword>
<keyword id="KW-0378">Hydrolase</keyword>
<keyword id="KW-0472">Membrane</keyword>
<keyword id="KW-0547">Nucleotide-binding</keyword>
<keyword id="KW-0648">Protein biosynthesis</keyword>
<comment type="function">
    <text evidence="1">Required for accurate and efficient protein synthesis under certain stress conditions. May act as a fidelity factor of the translation reaction, by catalyzing a one-codon backward translocation of tRNAs on improperly translocated ribosomes. Back-translocation proceeds from a post-translocation (POST) complex to a pre-translocation (PRE) complex, thus giving elongation factor G a second chance to translocate the tRNAs correctly. Binds to ribosomes in a GTP-dependent manner.</text>
</comment>
<comment type="catalytic activity">
    <reaction evidence="1">
        <text>GTP + H2O = GDP + phosphate + H(+)</text>
        <dbReference type="Rhea" id="RHEA:19669"/>
        <dbReference type="ChEBI" id="CHEBI:15377"/>
        <dbReference type="ChEBI" id="CHEBI:15378"/>
        <dbReference type="ChEBI" id="CHEBI:37565"/>
        <dbReference type="ChEBI" id="CHEBI:43474"/>
        <dbReference type="ChEBI" id="CHEBI:58189"/>
        <dbReference type="EC" id="3.6.5.n1"/>
    </reaction>
</comment>
<comment type="subcellular location">
    <subcellularLocation>
        <location evidence="1">Cell inner membrane</location>
        <topology evidence="1">Peripheral membrane protein</topology>
        <orientation evidence="1">Cytoplasmic side</orientation>
    </subcellularLocation>
</comment>
<comment type="similarity">
    <text evidence="1">Belongs to the TRAFAC class translation factor GTPase superfamily. Classic translation factor GTPase family. LepA subfamily.</text>
</comment>
<protein>
    <recommendedName>
        <fullName evidence="1">Elongation factor 4</fullName>
        <shortName evidence="1">EF-4</shortName>
        <ecNumber evidence="1">3.6.5.n1</ecNumber>
    </recommendedName>
    <alternativeName>
        <fullName evidence="1">Ribosomal back-translocase LepA</fullName>
    </alternativeName>
</protein>
<evidence type="ECO:0000255" key="1">
    <source>
        <dbReference type="HAMAP-Rule" id="MF_00071"/>
    </source>
</evidence>
<feature type="chain" id="PRO_0000224792" description="Elongation factor 4">
    <location>
        <begin position="1"/>
        <end position="599"/>
    </location>
</feature>
<feature type="domain" description="tr-type G">
    <location>
        <begin position="2"/>
        <end position="184"/>
    </location>
</feature>
<feature type="binding site" evidence="1">
    <location>
        <begin position="14"/>
        <end position="19"/>
    </location>
    <ligand>
        <name>GTP</name>
        <dbReference type="ChEBI" id="CHEBI:37565"/>
    </ligand>
</feature>
<feature type="binding site" evidence="1">
    <location>
        <begin position="131"/>
        <end position="134"/>
    </location>
    <ligand>
        <name>GTP</name>
        <dbReference type="ChEBI" id="CHEBI:37565"/>
    </ligand>
</feature>